<comment type="function">
    <text evidence="2 4">Its primary physiological function is unclear. May play a role in neuronal development and synaptic plasticity. May be required for neuronal myelin sheath maintenance. May promote myelin homeostasis through acting as an agonist for ADGRG6 receptor. May play a role in iron uptake and iron homeostasis. Soluble oligomers are toxic to cultured neuroblastoma cells and induce apoptosis (in vitro) (By similarity). Association with GPC1 (via its heparan sulfate chains) targets PRNP to lipid rafts. Also provides Cu(2+) or Zn(2+) for the ascorbate-mediated GPC1 deaminase degradation of its heparan sulfate side chains (By similarity).</text>
</comment>
<comment type="subunit">
    <text evidence="2 4">Monomer and homodimer. Has a tendency to aggregate into amyloid fibrils containing a cross-beta spine, formed by a steric zipper of superposed beta-strands. Soluble oligomers may represent an intermediate stage on the path to fibril formation. Copper binding may promote oligomerization. Interacts with GRB2, APP, ERI3/PRNPIP and SYN1 (By similarity). Mislocalized cytosolically exposed PrP interacts with MGRN1; this interaction alters MGRN1 subcellular location and causes lysosomal enlargement (By similarity). Interacts with APP. Interacts with KIAA1191 (By similarity). Interacts with ADGRG6 (By similarity).</text>
</comment>
<comment type="subcellular location">
    <subcellularLocation>
        <location evidence="2">Cell membrane</location>
        <topology evidence="2">Lipid-anchor</topology>
        <topology evidence="2">GPI-anchor</topology>
    </subcellularLocation>
    <subcellularLocation>
        <location evidence="4">Golgi apparatus</location>
    </subcellularLocation>
    <text evidence="2">Targeted to lipid rafts via association with the heparan sulfate chains of GPC1. Colocates, in the presence of Cu(2+), to vesicles in para- and perinuclear regions, where both proteins undergo internalization. Heparin displaces PRNP from lipid rafts and promotes endocytosis.</text>
</comment>
<comment type="domain">
    <text evidence="2">The normal, monomeric form has a mainly alpha-helical structure. The disease-associated, protease-resistant form forms amyloid fibrils containing a cross-beta spine, formed by a steric zipper of superposed beta-strands. Disease mutations may favor intermolecular contacts via short beta strands, and may thereby trigger oligomerization.</text>
</comment>
<comment type="domain">
    <text evidence="2">Contains an N-terminal region composed of octamer repeats. At low copper concentrations, the sidechains of His residues from three or four repeats contribute to the binding of a single copper ion. Alternatively, a copper ion can be bound by interaction with the sidechain and backbone amide nitrogen of a single His residue. The observed copper binding stoichiometry suggests that two repeat regions cooperate to stabilize the binding of a single copper ion. At higher copper concentrations, each octamer can bind one copper ion by interactions with the His sidechain and Gly backbone atoms. A mixture of binding types may occur, especially in the case of octamer repeat expansion. Copper binding may stabilize the conformation of this region and may promote oligomerization.</text>
</comment>
<comment type="disease">
    <text evidence="7">Found in high quantity in the brain of humans and animals infected with degenerative neurological diseases such as kuru, Creutzfeldt-Jakob disease (CJD), Gerstmann-Straussler syndrome (GSS), scrapie, bovine spongiform encephalopathy (BSE), transmissible mink encephalopathy (TME), etc.</text>
</comment>
<comment type="similarity">
    <text evidence="7">Belongs to the prion family.</text>
</comment>
<reference key="1">
    <citation type="journal article" date="1994" name="Neurosci. Lett.">
        <title>Prion protein (PrP) is not involved in the pathogenesis of spongiform encephalopathy in zitter rats.</title>
        <authorList>
            <person name="Gomi H."/>
            <person name="Ikeda T."/>
            <person name="Kunieda T."/>
            <person name="Itohara S."/>
            <person name="Prusiner S.B."/>
            <person name="Yamanouchi K."/>
        </authorList>
    </citation>
    <scope>NUCLEOTIDE SEQUENCE [GENOMIC DNA]</scope>
    <source>
        <strain>SJ/D</strain>
        <strain>Zitter</strain>
        <tissue>Liver</tissue>
    </source>
</reference>
<reference key="2">
    <citation type="journal article" date="1996" name="Virus Genes">
        <title>Three-exon structure of the gene encoding the rat prion protein and its expression in tissues.</title>
        <authorList>
            <person name="Saeki K."/>
            <person name="Matsumoto Y."/>
            <person name="Hirota Y."/>
            <person name="Matsumoto Y."/>
            <person name="Onodera T."/>
        </authorList>
    </citation>
    <scope>NUCLEOTIDE SEQUENCE [GENOMIC DNA]</scope>
    <source>
        <strain>Wistar</strain>
        <tissue>Liver</tissue>
    </source>
</reference>
<reference key="3">
    <citation type="journal article" date="1999" name="J. Mol. Biol.">
        <title>Analysis of 27 mammalian and 9 avian PrPs reveals high conservation of flexible regions of the prion protein.</title>
        <authorList>
            <person name="Wopfner F."/>
            <person name="Weidenhofer G."/>
            <person name="Schneider R."/>
            <person name="von Brunn A."/>
            <person name="Gilch S."/>
            <person name="Schwarz T.F."/>
            <person name="Werner T."/>
            <person name="Schatzl H.M."/>
        </authorList>
    </citation>
    <scope>NUCLEOTIDE SEQUENCE [GENOMIC DNA]</scope>
    <source>
        <tissue>Brain</tissue>
    </source>
</reference>
<reference key="4">
    <citation type="journal article" date="2004" name="Genome Res.">
        <title>The status, quality, and expansion of the NIH full-length cDNA project: the Mammalian Gene Collection (MGC).</title>
        <authorList>
            <consortium name="The MGC Project Team"/>
        </authorList>
    </citation>
    <scope>NUCLEOTIDE SEQUENCE [LARGE SCALE MRNA]</scope>
    <source>
        <tissue>Lung</tissue>
    </source>
</reference>
<reference key="5">
    <citation type="journal article" date="1987" name="Lab. Invest.">
        <title>Cloning of rat 'prion-related protein' cDNA.</title>
        <authorList>
            <person name="Liao Y.-C."/>
            <person name="Tokes Z."/>
            <person name="Lim E."/>
            <person name="Lackey A."/>
            <person name="Woo C.H."/>
            <person name="Button J.D."/>
            <person name="Clawson G.A."/>
        </authorList>
    </citation>
    <scope>NUCLEOTIDE SEQUENCE [MRNA] OF 29-254</scope>
</reference>
<reference key="6">
    <citation type="submission" date="2007-09" db="UniProtKB">
        <authorList>
            <person name="Lubec G."/>
            <person name="Kang S.U."/>
            <person name="Lubec S."/>
        </authorList>
    </citation>
    <scope>PROTEIN SEQUENCE OF 209-229</scope>
    <scope>IDENTIFICATION BY MASS SPECTROMETRY</scope>
    <source>
        <strain>Sprague-Dawley</strain>
        <tissue>Brain</tissue>
    </source>
</reference>
<gene>
    <name type="primary">Prnp</name>
    <name type="synonym">Prn</name>
    <name type="synonym">Prp</name>
</gene>
<dbReference type="EMBL" id="S69654">
    <property type="protein sequence ID" value="AAB30728.2"/>
    <property type="molecule type" value="Genomic_DNA"/>
</dbReference>
<dbReference type="EMBL" id="D50093">
    <property type="protein sequence ID" value="BAA08790.1"/>
    <property type="molecule type" value="Genomic_DNA"/>
</dbReference>
<dbReference type="EMBL" id="AF117322">
    <property type="protein sequence ID" value="AAD19993.1"/>
    <property type="molecule type" value="Genomic_DNA"/>
</dbReference>
<dbReference type="EMBL" id="BC072692">
    <property type="protein sequence ID" value="AAH72692.1"/>
    <property type="molecule type" value="mRNA"/>
</dbReference>
<dbReference type="EMBL" id="M20313">
    <property type="protein sequence ID" value="AAA41947.1"/>
    <property type="molecule type" value="mRNA"/>
</dbReference>
<dbReference type="PIR" id="A53892">
    <property type="entry name" value="A53892"/>
</dbReference>
<dbReference type="RefSeq" id="NP_001382587.1">
    <property type="nucleotide sequence ID" value="NM_001395658.1"/>
</dbReference>
<dbReference type="RefSeq" id="NP_036763.1">
    <property type="nucleotide sequence ID" value="NM_012631.3"/>
</dbReference>
<dbReference type="RefSeq" id="XP_006235124.1">
    <property type="nucleotide sequence ID" value="XM_006235062.3"/>
</dbReference>
<dbReference type="RefSeq" id="XP_063139172.1">
    <property type="nucleotide sequence ID" value="XM_063283102.1"/>
</dbReference>
<dbReference type="BMRB" id="P13852"/>
<dbReference type="SMR" id="P13852"/>
<dbReference type="BioGRID" id="246818">
    <property type="interactions" value="2"/>
</dbReference>
<dbReference type="FunCoup" id="P13852">
    <property type="interactions" value="1037"/>
</dbReference>
<dbReference type="STRING" id="10116.ENSRNOP00000028881"/>
<dbReference type="GlyCosmos" id="P13852">
    <property type="glycosylation" value="2 sites, No reported glycans"/>
</dbReference>
<dbReference type="GlyGen" id="P13852">
    <property type="glycosylation" value="2 sites"/>
</dbReference>
<dbReference type="iPTMnet" id="P13852"/>
<dbReference type="PhosphoSitePlus" id="P13852"/>
<dbReference type="jPOST" id="P13852"/>
<dbReference type="PaxDb" id="10116-ENSRNOP00000028881"/>
<dbReference type="Ensembl" id="ENSRNOT00000104185.1">
    <property type="protein sequence ID" value="ENSRNOP00000093351.1"/>
    <property type="gene ID" value="ENSRNOG00000021259.3"/>
</dbReference>
<dbReference type="Ensembl" id="ENSRNOT00000106614.1">
    <property type="protein sequence ID" value="ENSRNOP00000093957.1"/>
    <property type="gene ID" value="ENSRNOG00000021259.3"/>
</dbReference>
<dbReference type="Ensembl" id="ENSRNOT00000113525.1">
    <property type="protein sequence ID" value="ENSRNOP00000085462.1"/>
    <property type="gene ID" value="ENSRNOG00000021259.3"/>
</dbReference>
<dbReference type="Ensembl" id="ENSRNOT00000117610.1">
    <property type="protein sequence ID" value="ENSRNOP00000096232.1"/>
    <property type="gene ID" value="ENSRNOG00000021259.3"/>
</dbReference>
<dbReference type="GeneID" id="24686"/>
<dbReference type="KEGG" id="rno:24686"/>
<dbReference type="UCSC" id="RGD:3410">
    <property type="organism name" value="rat"/>
</dbReference>
<dbReference type="AGR" id="RGD:3410"/>
<dbReference type="CTD" id="5621"/>
<dbReference type="RGD" id="3410">
    <property type="gene designation" value="Prnp"/>
</dbReference>
<dbReference type="VEuPathDB" id="HostDB:ENSRNOG00000070982"/>
<dbReference type="eggNOG" id="ENOG502S2A8">
    <property type="taxonomic scope" value="Eukaryota"/>
</dbReference>
<dbReference type="GeneTree" id="ENSGT00510000049083"/>
<dbReference type="HOGENOM" id="CLU_094631_0_0_1"/>
<dbReference type="InParanoid" id="P13852"/>
<dbReference type="OMA" id="QMCTTQY"/>
<dbReference type="OrthoDB" id="9048788at2759"/>
<dbReference type="PhylomeDB" id="P13852"/>
<dbReference type="TreeFam" id="TF105188"/>
<dbReference type="Reactome" id="R-RNO-9609523">
    <property type="pathway name" value="Insertion of tail-anchored proteins into the endoplasmic reticulum membrane"/>
</dbReference>
<dbReference type="PRO" id="PR:P13852"/>
<dbReference type="Proteomes" id="UP000002494">
    <property type="component" value="Chromosome 3"/>
</dbReference>
<dbReference type="Bgee" id="ENSRNOG00000021259">
    <property type="expression patterns" value="Expressed in Ammon's horn and 19 other cell types or tissues"/>
</dbReference>
<dbReference type="GO" id="GO:0009986">
    <property type="term" value="C:cell surface"/>
    <property type="evidence" value="ECO:0000266"/>
    <property type="project" value="RGD"/>
</dbReference>
<dbReference type="GO" id="GO:0005829">
    <property type="term" value="C:cytosol"/>
    <property type="evidence" value="ECO:0007669"/>
    <property type="project" value="Ensembl"/>
</dbReference>
<dbReference type="GO" id="GO:0030425">
    <property type="term" value="C:dendrite"/>
    <property type="evidence" value="ECO:0000266"/>
    <property type="project" value="RGD"/>
</dbReference>
<dbReference type="GO" id="GO:0005783">
    <property type="term" value="C:endoplasmic reticulum"/>
    <property type="evidence" value="ECO:0000266"/>
    <property type="project" value="RGD"/>
</dbReference>
<dbReference type="GO" id="GO:0005794">
    <property type="term" value="C:Golgi apparatus"/>
    <property type="evidence" value="ECO:0000266"/>
    <property type="project" value="RGD"/>
</dbReference>
<dbReference type="GO" id="GO:0016234">
    <property type="term" value="C:inclusion body"/>
    <property type="evidence" value="ECO:0000266"/>
    <property type="project" value="RGD"/>
</dbReference>
<dbReference type="GO" id="GO:0016020">
    <property type="term" value="C:membrane"/>
    <property type="evidence" value="ECO:0000266"/>
    <property type="project" value="RGD"/>
</dbReference>
<dbReference type="GO" id="GO:0045121">
    <property type="term" value="C:membrane raft"/>
    <property type="evidence" value="ECO:0000266"/>
    <property type="project" value="RGD"/>
</dbReference>
<dbReference type="GO" id="GO:0005741">
    <property type="term" value="C:mitochondrial outer membrane"/>
    <property type="evidence" value="ECO:0000266"/>
    <property type="project" value="RGD"/>
</dbReference>
<dbReference type="GO" id="GO:0031965">
    <property type="term" value="C:nuclear membrane"/>
    <property type="evidence" value="ECO:0007669"/>
    <property type="project" value="Ensembl"/>
</dbReference>
<dbReference type="GO" id="GO:0005886">
    <property type="term" value="C:plasma membrane"/>
    <property type="evidence" value="ECO:0000266"/>
    <property type="project" value="RGD"/>
</dbReference>
<dbReference type="GO" id="GO:0014069">
    <property type="term" value="C:postsynaptic density"/>
    <property type="evidence" value="ECO:0000314"/>
    <property type="project" value="ARUK-UCL"/>
</dbReference>
<dbReference type="GO" id="GO:0098552">
    <property type="term" value="C:side of membrane"/>
    <property type="evidence" value="ECO:0007669"/>
    <property type="project" value="UniProtKB-KW"/>
</dbReference>
<dbReference type="GO" id="GO:0043195">
    <property type="term" value="C:terminal bouton"/>
    <property type="evidence" value="ECO:0000266"/>
    <property type="project" value="RGD"/>
</dbReference>
<dbReference type="GO" id="GO:0001540">
    <property type="term" value="F:amyloid-beta binding"/>
    <property type="evidence" value="ECO:0000266"/>
    <property type="project" value="RGD"/>
</dbReference>
<dbReference type="GO" id="GO:0019828">
    <property type="term" value="F:aspartic-type endopeptidase inhibitor activity"/>
    <property type="evidence" value="ECO:0000266"/>
    <property type="project" value="RGD"/>
</dbReference>
<dbReference type="GO" id="GO:0043008">
    <property type="term" value="F:ATP-dependent protein binding"/>
    <property type="evidence" value="ECO:0000353"/>
    <property type="project" value="RGD"/>
</dbReference>
<dbReference type="GO" id="GO:0005507">
    <property type="term" value="F:copper ion binding"/>
    <property type="evidence" value="ECO:0000250"/>
    <property type="project" value="UniProtKB"/>
</dbReference>
<dbReference type="GO" id="GO:1903135">
    <property type="term" value="F:cupric ion binding"/>
    <property type="evidence" value="ECO:0000266"/>
    <property type="project" value="RGD"/>
</dbReference>
<dbReference type="GO" id="GO:1903136">
    <property type="term" value="F:cuprous ion binding"/>
    <property type="evidence" value="ECO:0000266"/>
    <property type="project" value="RGD"/>
</dbReference>
<dbReference type="GO" id="GO:0005539">
    <property type="term" value="F:glycosaminoglycan binding"/>
    <property type="evidence" value="ECO:0000266"/>
    <property type="project" value="RGD"/>
</dbReference>
<dbReference type="GO" id="GO:0042802">
    <property type="term" value="F:identical protein binding"/>
    <property type="evidence" value="ECO:0000266"/>
    <property type="project" value="RGD"/>
</dbReference>
<dbReference type="GO" id="GO:0005521">
    <property type="term" value="F:lamin binding"/>
    <property type="evidence" value="ECO:0000353"/>
    <property type="project" value="RGD"/>
</dbReference>
<dbReference type="GO" id="GO:0046872">
    <property type="term" value="F:metal ion binding"/>
    <property type="evidence" value="ECO:0000266"/>
    <property type="project" value="RGD"/>
</dbReference>
<dbReference type="GO" id="GO:0008017">
    <property type="term" value="F:microtubule binding"/>
    <property type="evidence" value="ECO:0000266"/>
    <property type="project" value="RGD"/>
</dbReference>
<dbReference type="GO" id="GO:0060090">
    <property type="term" value="F:molecular adaptor activity"/>
    <property type="evidence" value="ECO:0000266"/>
    <property type="project" value="RGD"/>
</dbReference>
<dbReference type="GO" id="GO:0140693">
    <property type="term" value="F:molecular condensate scaffold activity"/>
    <property type="evidence" value="ECO:0000266"/>
    <property type="project" value="RGD"/>
</dbReference>
<dbReference type="GO" id="GO:0140677">
    <property type="term" value="F:molecular function activator activity"/>
    <property type="evidence" value="ECO:0007669"/>
    <property type="project" value="Ensembl"/>
</dbReference>
<dbReference type="GO" id="GO:0002020">
    <property type="term" value="F:protease binding"/>
    <property type="evidence" value="ECO:0000266"/>
    <property type="project" value="RGD"/>
</dbReference>
<dbReference type="GO" id="GO:0044877">
    <property type="term" value="F:protein-containing complex binding"/>
    <property type="evidence" value="ECO:0000266"/>
    <property type="project" value="RGD"/>
</dbReference>
<dbReference type="GO" id="GO:0051087">
    <property type="term" value="F:protein-folding chaperone binding"/>
    <property type="evidence" value="ECO:0000353"/>
    <property type="project" value="RGD"/>
</dbReference>
<dbReference type="GO" id="GO:0038023">
    <property type="term" value="F:signaling receptor activity"/>
    <property type="evidence" value="ECO:0000266"/>
    <property type="project" value="RGD"/>
</dbReference>
<dbReference type="GO" id="GO:0044325">
    <property type="term" value="F:transmembrane transporter binding"/>
    <property type="evidence" value="ECO:0000353"/>
    <property type="project" value="RGD"/>
</dbReference>
<dbReference type="GO" id="GO:0015631">
    <property type="term" value="F:tubulin binding"/>
    <property type="evidence" value="ECO:0000266"/>
    <property type="project" value="RGD"/>
</dbReference>
<dbReference type="GO" id="GO:0031802">
    <property type="term" value="F:type 5 metabotropic glutamate receptor binding"/>
    <property type="evidence" value="ECO:0000353"/>
    <property type="project" value="ARUK-UCL"/>
</dbReference>
<dbReference type="GO" id="GO:1904646">
    <property type="term" value="P:cellular response to amyloid-beta"/>
    <property type="evidence" value="ECO:0000266"/>
    <property type="project" value="RGD"/>
</dbReference>
<dbReference type="GO" id="GO:0071280">
    <property type="term" value="P:cellular response to copper ion"/>
    <property type="evidence" value="ECO:0000266"/>
    <property type="project" value="RGD"/>
</dbReference>
<dbReference type="GO" id="GO:0071466">
    <property type="term" value="P:cellular response to xenobiotic stimulus"/>
    <property type="evidence" value="ECO:0000266"/>
    <property type="project" value="RGD"/>
</dbReference>
<dbReference type="GO" id="GO:0035556">
    <property type="term" value="P:intracellular signal transduction"/>
    <property type="evidence" value="ECO:0000266"/>
    <property type="project" value="RGD"/>
</dbReference>
<dbReference type="GO" id="GO:0007611">
    <property type="term" value="P:learning or memory"/>
    <property type="evidence" value="ECO:0000315"/>
    <property type="project" value="RGD"/>
</dbReference>
<dbReference type="GO" id="GO:0046007">
    <property type="term" value="P:negative regulation of activated T cell proliferation"/>
    <property type="evidence" value="ECO:0000266"/>
    <property type="project" value="RGD"/>
</dbReference>
<dbReference type="GO" id="GO:1902992">
    <property type="term" value="P:negative regulation of amyloid precursor protein catabolic process"/>
    <property type="evidence" value="ECO:0000266"/>
    <property type="project" value="RGD"/>
</dbReference>
<dbReference type="GO" id="GO:1902430">
    <property type="term" value="P:negative regulation of amyloid-beta formation"/>
    <property type="evidence" value="ECO:0000266"/>
    <property type="project" value="RGD"/>
</dbReference>
<dbReference type="GO" id="GO:0043066">
    <property type="term" value="P:negative regulation of apoptotic process"/>
    <property type="evidence" value="ECO:0000315"/>
    <property type="project" value="RGD"/>
</dbReference>
<dbReference type="GO" id="GO:0070885">
    <property type="term" value="P:negative regulation of calcineurin-NFAT signaling cascade"/>
    <property type="evidence" value="ECO:0000266"/>
    <property type="project" value="RGD"/>
</dbReference>
<dbReference type="GO" id="GO:1902951">
    <property type="term" value="P:negative regulation of dendritic spine maintenance"/>
    <property type="evidence" value="ECO:0000266"/>
    <property type="project" value="RGD"/>
</dbReference>
<dbReference type="GO" id="GO:0032700">
    <property type="term" value="P:negative regulation of interleukin-17 production"/>
    <property type="evidence" value="ECO:0000266"/>
    <property type="project" value="RGD"/>
</dbReference>
<dbReference type="GO" id="GO:0032703">
    <property type="term" value="P:negative regulation of interleukin-2 production"/>
    <property type="evidence" value="ECO:0000266"/>
    <property type="project" value="RGD"/>
</dbReference>
<dbReference type="GO" id="GO:1900272">
    <property type="term" value="P:negative regulation of long-term synaptic potentiation"/>
    <property type="evidence" value="ECO:0000314"/>
    <property type="project" value="ARUK-UCL"/>
</dbReference>
<dbReference type="GO" id="GO:0050860">
    <property type="term" value="P:negative regulation of T cell receptor signaling pathway"/>
    <property type="evidence" value="ECO:0000266"/>
    <property type="project" value="RGD"/>
</dbReference>
<dbReference type="GO" id="GO:0000122">
    <property type="term" value="P:negative regulation of transcription by RNA polymerase II"/>
    <property type="evidence" value="ECO:0007669"/>
    <property type="project" value="Ensembl"/>
</dbReference>
<dbReference type="GO" id="GO:0032689">
    <property type="term" value="P:negative regulation of type II interferon production"/>
    <property type="evidence" value="ECO:0000266"/>
    <property type="project" value="RGD"/>
</dbReference>
<dbReference type="GO" id="GO:1990535">
    <property type="term" value="P:neuron projection maintenance"/>
    <property type="evidence" value="ECO:0000266"/>
    <property type="project" value="RGD"/>
</dbReference>
<dbReference type="GO" id="GO:0050850">
    <property type="term" value="P:positive regulation of calcium-mediated signaling"/>
    <property type="evidence" value="ECO:0000266"/>
    <property type="project" value="RGD"/>
</dbReference>
<dbReference type="GO" id="GO:1900451">
    <property type="term" value="P:positive regulation of glutamate receptor signaling pathway"/>
    <property type="evidence" value="ECO:0000266"/>
    <property type="project" value="RGD"/>
</dbReference>
<dbReference type="GO" id="GO:0043525">
    <property type="term" value="P:positive regulation of neuron apoptotic process"/>
    <property type="evidence" value="ECO:0000266"/>
    <property type="project" value="RGD"/>
</dbReference>
<dbReference type="GO" id="GO:1903078">
    <property type="term" value="P:positive regulation of protein localization to plasma membrane"/>
    <property type="evidence" value="ECO:0000315"/>
    <property type="project" value="ARUK-UCL"/>
</dbReference>
<dbReference type="GO" id="GO:0090314">
    <property type="term" value="P:positive regulation of protein targeting to membrane"/>
    <property type="evidence" value="ECO:0000266"/>
    <property type="project" value="RGD"/>
</dbReference>
<dbReference type="GO" id="GO:0031648">
    <property type="term" value="P:protein destabilization"/>
    <property type="evidence" value="ECO:0000266"/>
    <property type="project" value="RGD"/>
</dbReference>
<dbReference type="GO" id="GO:0051260">
    <property type="term" value="P:protein homooligomerization"/>
    <property type="evidence" value="ECO:0007669"/>
    <property type="project" value="InterPro"/>
</dbReference>
<dbReference type="GO" id="GO:1905664">
    <property type="term" value="P:regulation of calcium ion import across plasma membrane"/>
    <property type="evidence" value="ECO:0000266"/>
    <property type="project" value="RGD"/>
</dbReference>
<dbReference type="GO" id="GO:1900449">
    <property type="term" value="P:regulation of glutamate receptor signaling pathway"/>
    <property type="evidence" value="ECO:0000266"/>
    <property type="project" value="RGD"/>
</dbReference>
<dbReference type="GO" id="GO:1901379">
    <property type="term" value="P:regulation of potassium ion transmembrane transport"/>
    <property type="evidence" value="ECO:0000266"/>
    <property type="project" value="RGD"/>
</dbReference>
<dbReference type="GO" id="GO:0032880">
    <property type="term" value="P:regulation of protein localization"/>
    <property type="evidence" value="ECO:0000266"/>
    <property type="project" value="RGD"/>
</dbReference>
<dbReference type="GO" id="GO:1904645">
    <property type="term" value="P:response to amyloid-beta"/>
    <property type="evidence" value="ECO:0000266"/>
    <property type="project" value="RGD"/>
</dbReference>
<dbReference type="GO" id="GO:0046686">
    <property type="term" value="P:response to cadmium ion"/>
    <property type="evidence" value="ECO:0000314"/>
    <property type="project" value="RGD"/>
</dbReference>
<dbReference type="GO" id="GO:0046688">
    <property type="term" value="P:response to copper ion"/>
    <property type="evidence" value="ECO:0000314"/>
    <property type="project" value="RGD"/>
</dbReference>
<dbReference type="GO" id="GO:0006979">
    <property type="term" value="P:response to oxidative stress"/>
    <property type="evidence" value="ECO:0000266"/>
    <property type="project" value="RGD"/>
</dbReference>
<dbReference type="FunFam" id="1.10.790.10:FF:000001">
    <property type="entry name" value="Major prion protein"/>
    <property type="match status" value="1"/>
</dbReference>
<dbReference type="Gene3D" id="1.10.790.10">
    <property type="entry name" value="Prion/Doppel protein, beta-ribbon domain"/>
    <property type="match status" value="1"/>
</dbReference>
<dbReference type="InterPro" id="IPR000817">
    <property type="entry name" value="Prion"/>
</dbReference>
<dbReference type="InterPro" id="IPR036924">
    <property type="entry name" value="Prion/Doppel_b-ribbon_dom_sf"/>
</dbReference>
<dbReference type="InterPro" id="IPR022416">
    <property type="entry name" value="Prion/Doppel_prot_b-ribbon_dom"/>
</dbReference>
<dbReference type="InterPro" id="IPR020949">
    <property type="entry name" value="Prion_copper_b_octapeptide"/>
</dbReference>
<dbReference type="InterPro" id="IPR025860">
    <property type="entry name" value="Prion_N"/>
</dbReference>
<dbReference type="PANTHER" id="PTHR15506">
    <property type="entry name" value="DOPPEL PRION"/>
    <property type="match status" value="1"/>
</dbReference>
<dbReference type="PANTHER" id="PTHR15506:SF2">
    <property type="entry name" value="MAJOR PRION PROTEIN"/>
    <property type="match status" value="1"/>
</dbReference>
<dbReference type="Pfam" id="PF00377">
    <property type="entry name" value="Prion"/>
    <property type="match status" value="1"/>
</dbReference>
<dbReference type="Pfam" id="PF11587">
    <property type="entry name" value="Prion_bPrPp"/>
    <property type="match status" value="1"/>
</dbReference>
<dbReference type="Pfam" id="PF03991">
    <property type="entry name" value="Prion_octapep"/>
    <property type="match status" value="1"/>
</dbReference>
<dbReference type="PRINTS" id="PR00341">
    <property type="entry name" value="PRION"/>
</dbReference>
<dbReference type="SMART" id="SM00157">
    <property type="entry name" value="PRP"/>
    <property type="match status" value="1"/>
</dbReference>
<dbReference type="SUPFAM" id="SSF54098">
    <property type="entry name" value="Prion-like"/>
    <property type="match status" value="1"/>
</dbReference>
<dbReference type="PROSITE" id="PS00291">
    <property type="entry name" value="PRION_1"/>
    <property type="match status" value="1"/>
</dbReference>
<dbReference type="PROSITE" id="PS00706">
    <property type="entry name" value="PRION_2"/>
    <property type="match status" value="1"/>
</dbReference>
<name>PRIO_RAT</name>
<feature type="signal peptide" evidence="5">
    <location>
        <begin position="1"/>
        <end position="28"/>
    </location>
</feature>
<feature type="chain" id="PRO_0000025723" description="Major prion protein">
    <location>
        <begin position="29"/>
        <end position="231"/>
    </location>
</feature>
<feature type="propeptide" id="PRO_0000025724" description="Removed in mature form" evidence="1">
    <location>
        <begin position="232"/>
        <end position="254"/>
    </location>
</feature>
<feature type="repeat" description="1">
    <location>
        <begin position="51"/>
        <end position="59"/>
    </location>
</feature>
<feature type="repeat" description="2">
    <location>
        <begin position="60"/>
        <end position="67"/>
    </location>
</feature>
<feature type="repeat" description="3">
    <location>
        <begin position="68"/>
        <end position="75"/>
    </location>
</feature>
<feature type="repeat" description="4">
    <location>
        <begin position="76"/>
        <end position="83"/>
    </location>
</feature>
<feature type="repeat" description="5">
    <location>
        <begin position="84"/>
        <end position="91"/>
    </location>
</feature>
<feature type="region of interest" description="Interaction with GRB2, ERI3 and SYN1" evidence="4">
    <location>
        <begin position="23"/>
        <end position="231"/>
    </location>
</feature>
<feature type="region of interest" description="Interaction with ADGRG6" evidence="4">
    <location>
        <begin position="23"/>
        <end position="38"/>
    </location>
</feature>
<feature type="region of interest" description="Disordered" evidence="6">
    <location>
        <begin position="24"/>
        <end position="107"/>
    </location>
</feature>
<feature type="region of interest" description="5 X 8 AA tandem repeats of P-H-G-G-G-W-G-Q">
    <location>
        <begin position="51"/>
        <end position="91"/>
    </location>
</feature>
<feature type="compositionally biased region" description="Gly residues" evidence="6">
    <location>
        <begin position="55"/>
        <end position="95"/>
    </location>
</feature>
<feature type="binding site" evidence="2">
    <location>
        <position position="61"/>
    </location>
    <ligand>
        <name>Cu(2+)</name>
        <dbReference type="ChEBI" id="CHEBI:29036"/>
        <label>1</label>
    </ligand>
</feature>
<feature type="binding site" evidence="2">
    <location>
        <position position="62"/>
    </location>
    <ligand>
        <name>Cu(2+)</name>
        <dbReference type="ChEBI" id="CHEBI:29036"/>
        <label>1</label>
    </ligand>
</feature>
<feature type="binding site" evidence="2">
    <location>
        <position position="63"/>
    </location>
    <ligand>
        <name>Cu(2+)</name>
        <dbReference type="ChEBI" id="CHEBI:29036"/>
        <label>1</label>
    </ligand>
</feature>
<feature type="binding site" evidence="2">
    <location>
        <position position="69"/>
    </location>
    <ligand>
        <name>Cu(2+)</name>
        <dbReference type="ChEBI" id="CHEBI:29036"/>
        <label>2</label>
    </ligand>
</feature>
<feature type="binding site" evidence="2">
    <location>
        <position position="70"/>
    </location>
    <ligand>
        <name>Cu(2+)</name>
        <dbReference type="ChEBI" id="CHEBI:29036"/>
        <label>2</label>
    </ligand>
</feature>
<feature type="binding site" evidence="2">
    <location>
        <position position="71"/>
    </location>
    <ligand>
        <name>Cu(2+)</name>
        <dbReference type="ChEBI" id="CHEBI:29036"/>
        <label>2</label>
    </ligand>
</feature>
<feature type="binding site" evidence="2">
    <location>
        <position position="77"/>
    </location>
    <ligand>
        <name>Cu(2+)</name>
        <dbReference type="ChEBI" id="CHEBI:29036"/>
        <label>3</label>
    </ligand>
</feature>
<feature type="binding site" evidence="2">
    <location>
        <position position="78"/>
    </location>
    <ligand>
        <name>Cu(2+)</name>
        <dbReference type="ChEBI" id="CHEBI:29036"/>
        <label>3</label>
    </ligand>
</feature>
<feature type="binding site" evidence="2">
    <location>
        <position position="79"/>
    </location>
    <ligand>
        <name>Cu(2+)</name>
        <dbReference type="ChEBI" id="CHEBI:29036"/>
        <label>3</label>
    </ligand>
</feature>
<feature type="binding site" evidence="2">
    <location>
        <position position="85"/>
    </location>
    <ligand>
        <name>Cu(2+)</name>
        <dbReference type="ChEBI" id="CHEBI:29036"/>
        <label>4</label>
    </ligand>
</feature>
<feature type="binding site" evidence="2">
    <location>
        <position position="86"/>
    </location>
    <ligand>
        <name>Cu(2+)</name>
        <dbReference type="ChEBI" id="CHEBI:29036"/>
        <label>4</label>
    </ligand>
</feature>
<feature type="binding site" evidence="2">
    <location>
        <position position="87"/>
    </location>
    <ligand>
        <name>Cu(2+)</name>
        <dbReference type="ChEBI" id="CHEBI:29036"/>
        <label>4</label>
    </ligand>
</feature>
<feature type="lipid moiety-binding region" description="GPI-anchor amidated serine" evidence="3">
    <location>
        <position position="231"/>
    </location>
</feature>
<feature type="glycosylation site" description="N-linked (GlcNAc...) asparagine" evidence="7">
    <location>
        <position position="181"/>
    </location>
</feature>
<feature type="glycosylation site" description="N-linked (GlcNAc...) asparagine" evidence="7">
    <location>
        <position position="197"/>
    </location>
</feature>
<feature type="disulfide bond" evidence="3">
    <location>
        <begin position="179"/>
        <end position="214"/>
    </location>
</feature>
<evidence type="ECO:0000250" key="1"/>
<evidence type="ECO:0000250" key="2">
    <source>
        <dbReference type="UniProtKB" id="P04156"/>
    </source>
</evidence>
<evidence type="ECO:0000250" key="3">
    <source>
        <dbReference type="UniProtKB" id="P04273"/>
    </source>
</evidence>
<evidence type="ECO:0000250" key="4">
    <source>
        <dbReference type="UniProtKB" id="P04925"/>
    </source>
</evidence>
<evidence type="ECO:0000255" key="5"/>
<evidence type="ECO:0000256" key="6">
    <source>
        <dbReference type="SAM" id="MobiDB-lite"/>
    </source>
</evidence>
<evidence type="ECO:0000305" key="7"/>
<sequence length="254" mass="27804">MANLGYWLLALFVTTCTDVGLCKKRPKPGGWNTGGSRYPGQGSPGGNRYPPQSGGTWGQPHGGGWGQPHGGGWGQPHGGGWGQPHGGGWSQGGGTHNQWNKPSKPKTNLKHVAGAAAAGAVVGGLGGYMLGSAMSRPMLHFGNDWEDRYYRENMYRYPNQVYYRPVDQYSNQNNFVHDCVNITIKQHTVTTTTKGENFTETDVKMMERVVEQMCVTQYQKESQAYYDGRRSSAVLFSSPPVILLISFLIFLIVG</sequence>
<protein>
    <recommendedName>
        <fullName>Major prion protein</fullName>
        <shortName>PrP</shortName>
    </recommendedName>
    <cdAntigenName>CD230</cdAntigenName>
</protein>
<proteinExistence type="evidence at protein level"/>
<organism>
    <name type="scientific">Rattus norvegicus</name>
    <name type="common">Rat</name>
    <dbReference type="NCBI Taxonomy" id="10116"/>
    <lineage>
        <taxon>Eukaryota</taxon>
        <taxon>Metazoa</taxon>
        <taxon>Chordata</taxon>
        <taxon>Craniata</taxon>
        <taxon>Vertebrata</taxon>
        <taxon>Euteleostomi</taxon>
        <taxon>Mammalia</taxon>
        <taxon>Eutheria</taxon>
        <taxon>Euarchontoglires</taxon>
        <taxon>Glires</taxon>
        <taxon>Rodentia</taxon>
        <taxon>Myomorpha</taxon>
        <taxon>Muroidea</taxon>
        <taxon>Muridae</taxon>
        <taxon>Murinae</taxon>
        <taxon>Rattus</taxon>
    </lineage>
</organism>
<keyword id="KW-0034">Amyloid</keyword>
<keyword id="KW-1003">Cell membrane</keyword>
<keyword id="KW-0186">Copper</keyword>
<keyword id="KW-0903">Direct protein sequencing</keyword>
<keyword id="KW-1015">Disulfide bond</keyword>
<keyword id="KW-0325">Glycoprotein</keyword>
<keyword id="KW-0333">Golgi apparatus</keyword>
<keyword id="KW-0336">GPI-anchor</keyword>
<keyword id="KW-0449">Lipoprotein</keyword>
<keyword id="KW-0472">Membrane</keyword>
<keyword id="KW-0479">Metal-binding</keyword>
<keyword id="KW-0640">Prion</keyword>
<keyword id="KW-1185">Reference proteome</keyword>
<keyword id="KW-0677">Repeat</keyword>
<keyword id="KW-0732">Signal</keyword>
<keyword id="KW-0862">Zinc</keyword>
<accession>P13852</accession>
<accession>Q549H6</accession>